<keyword id="KW-0521">NADP</keyword>
<keyword id="KW-0560">Oxidoreductase</keyword>
<keyword id="KW-0627">Porphyrin biosynthesis</keyword>
<keyword id="KW-1185">Reference proteome</keyword>
<reference key="1">
    <citation type="submission" date="1997-01" db="EMBL/GenBank/DDBJ databases">
        <authorList>
            <person name="Castrillon R.T."/>
        </authorList>
    </citation>
    <scope>NUCLEOTIDE SEQUENCE [GENOMIC DNA]</scope>
    <source>
        <strain>2.5</strain>
    </source>
</reference>
<reference key="2">
    <citation type="journal article" date="2001" name="Proc. Natl. Acad. Sci. U.S.A.">
        <title>Complete genomic sequence of Pasteurella multocida Pm70.</title>
        <authorList>
            <person name="May B.J."/>
            <person name="Zhang Q."/>
            <person name="Li L.L."/>
            <person name="Paustian M.L."/>
            <person name="Whittam T.S."/>
            <person name="Kapur V."/>
        </authorList>
    </citation>
    <scope>NUCLEOTIDE SEQUENCE [LARGE SCALE GENOMIC DNA]</scope>
    <source>
        <strain>Pm70</strain>
    </source>
</reference>
<dbReference type="EC" id="1.2.1.70" evidence="1"/>
<dbReference type="EMBL" id="Y10430">
    <property type="protein sequence ID" value="CAA71452.1"/>
    <property type="molecule type" value="Genomic_DNA"/>
</dbReference>
<dbReference type="EMBL" id="AE004439">
    <property type="protein sequence ID" value="AAK02768.1"/>
    <property type="molecule type" value="Genomic_DNA"/>
</dbReference>
<dbReference type="RefSeq" id="WP_010906790.1">
    <property type="nucleotide sequence ID" value="NC_002663.1"/>
</dbReference>
<dbReference type="SMR" id="P95525"/>
<dbReference type="STRING" id="272843.PM0684"/>
<dbReference type="EnsemblBacteria" id="AAK02768">
    <property type="protein sequence ID" value="AAK02768"/>
    <property type="gene ID" value="PM0684"/>
</dbReference>
<dbReference type="KEGG" id="pmu:PM0684"/>
<dbReference type="PATRIC" id="fig|272843.6.peg.692"/>
<dbReference type="HOGENOM" id="CLU_035113_2_2_6"/>
<dbReference type="OrthoDB" id="110209at2"/>
<dbReference type="UniPathway" id="UPA00251">
    <property type="reaction ID" value="UER00316"/>
</dbReference>
<dbReference type="Proteomes" id="UP000000809">
    <property type="component" value="Chromosome"/>
</dbReference>
<dbReference type="GO" id="GO:0008883">
    <property type="term" value="F:glutamyl-tRNA reductase activity"/>
    <property type="evidence" value="ECO:0007669"/>
    <property type="project" value="UniProtKB-UniRule"/>
</dbReference>
<dbReference type="GO" id="GO:0050661">
    <property type="term" value="F:NADP binding"/>
    <property type="evidence" value="ECO:0007669"/>
    <property type="project" value="InterPro"/>
</dbReference>
<dbReference type="GO" id="GO:0019353">
    <property type="term" value="P:protoporphyrinogen IX biosynthetic process from glutamate"/>
    <property type="evidence" value="ECO:0007669"/>
    <property type="project" value="TreeGrafter"/>
</dbReference>
<dbReference type="CDD" id="cd05213">
    <property type="entry name" value="NAD_bind_Glutamyl_tRNA_reduct"/>
    <property type="match status" value="1"/>
</dbReference>
<dbReference type="FunFam" id="3.30.460.30:FF:000001">
    <property type="entry name" value="Glutamyl-tRNA reductase"/>
    <property type="match status" value="1"/>
</dbReference>
<dbReference type="FunFam" id="3.40.50.720:FF:000031">
    <property type="entry name" value="Glutamyl-tRNA reductase"/>
    <property type="match status" value="1"/>
</dbReference>
<dbReference type="Gene3D" id="3.30.460.30">
    <property type="entry name" value="Glutamyl-tRNA reductase, N-terminal domain"/>
    <property type="match status" value="1"/>
</dbReference>
<dbReference type="Gene3D" id="3.40.50.720">
    <property type="entry name" value="NAD(P)-binding Rossmann-like Domain"/>
    <property type="match status" value="1"/>
</dbReference>
<dbReference type="HAMAP" id="MF_00087">
    <property type="entry name" value="Glu_tRNA_reductase"/>
    <property type="match status" value="1"/>
</dbReference>
<dbReference type="InterPro" id="IPR000343">
    <property type="entry name" value="4pyrrol_synth_GluRdtase"/>
</dbReference>
<dbReference type="InterPro" id="IPR015896">
    <property type="entry name" value="4pyrrol_synth_GluRdtase_dimer"/>
</dbReference>
<dbReference type="InterPro" id="IPR015895">
    <property type="entry name" value="4pyrrol_synth_GluRdtase_N"/>
</dbReference>
<dbReference type="InterPro" id="IPR018214">
    <property type="entry name" value="GluRdtase_CS"/>
</dbReference>
<dbReference type="InterPro" id="IPR036453">
    <property type="entry name" value="GluRdtase_dimer_dom_sf"/>
</dbReference>
<dbReference type="InterPro" id="IPR036343">
    <property type="entry name" value="GluRdtase_N_sf"/>
</dbReference>
<dbReference type="InterPro" id="IPR036291">
    <property type="entry name" value="NAD(P)-bd_dom_sf"/>
</dbReference>
<dbReference type="InterPro" id="IPR006151">
    <property type="entry name" value="Shikm_DH/Glu-tRNA_Rdtase"/>
</dbReference>
<dbReference type="NCBIfam" id="TIGR01035">
    <property type="entry name" value="hemA"/>
    <property type="match status" value="1"/>
</dbReference>
<dbReference type="PANTHER" id="PTHR43013">
    <property type="entry name" value="GLUTAMYL-TRNA REDUCTASE"/>
    <property type="match status" value="1"/>
</dbReference>
<dbReference type="PANTHER" id="PTHR43013:SF1">
    <property type="entry name" value="GLUTAMYL-TRNA REDUCTASE"/>
    <property type="match status" value="1"/>
</dbReference>
<dbReference type="Pfam" id="PF00745">
    <property type="entry name" value="GlutR_dimer"/>
    <property type="match status" value="1"/>
</dbReference>
<dbReference type="Pfam" id="PF05201">
    <property type="entry name" value="GlutR_N"/>
    <property type="match status" value="1"/>
</dbReference>
<dbReference type="Pfam" id="PF01488">
    <property type="entry name" value="Shikimate_DH"/>
    <property type="match status" value="1"/>
</dbReference>
<dbReference type="PIRSF" id="PIRSF000445">
    <property type="entry name" value="4pyrrol_synth_GluRdtase"/>
    <property type="match status" value="1"/>
</dbReference>
<dbReference type="SUPFAM" id="SSF69742">
    <property type="entry name" value="Glutamyl tRNA-reductase catalytic, N-terminal domain"/>
    <property type="match status" value="1"/>
</dbReference>
<dbReference type="SUPFAM" id="SSF69075">
    <property type="entry name" value="Glutamyl tRNA-reductase dimerization domain"/>
    <property type="match status" value="1"/>
</dbReference>
<dbReference type="SUPFAM" id="SSF51735">
    <property type="entry name" value="NAD(P)-binding Rossmann-fold domains"/>
    <property type="match status" value="1"/>
</dbReference>
<dbReference type="PROSITE" id="PS00747">
    <property type="entry name" value="GLUTR"/>
    <property type="match status" value="1"/>
</dbReference>
<sequence>MTILVIGINHKTASVAIREKVAFSAEKRVEALAQIQQQALAESAVILSTCNRTEVYFHHKAIPPQEAESWTARCMQWFAEIHQLSLDALAGCLYSQQNQQAVLHLMRVACGLDSLVLGEPQILGQVKDAYQLSKMYYQGQNQPLSSEFSRLFQKTFSVAKRVRTETNIGGNAVSVAYGACSLARQIFDSLKTLNVLLVGAGETIELTCRHLLRHGVQRIMIANRTFERAQHLVTKLDGAENVQVLALTQLQEGLNQADIVISSTGSPTILITQDMVKIAQKARCDLPMLLVDIAVPRDIEESVGELDSIYHYTVDDLQTIIQRNLVEREKASAQAWVIIQQECADFFEWLKVHQFSNLIRSYRENAEDIRQILLEKALLALRQGEDSEAVLQALSYKLTNKLLHSPTQVMNAMVKTGNSTGLALFSSTLKSDVE</sequence>
<proteinExistence type="inferred from homology"/>
<feature type="chain" id="PRO_0000114052" description="Glutamyl-tRNA reductase">
    <location>
        <begin position="1"/>
        <end position="434"/>
    </location>
</feature>
<feature type="active site" description="Nucleophile" evidence="1">
    <location>
        <position position="50"/>
    </location>
</feature>
<feature type="binding site" evidence="1">
    <location>
        <begin position="49"/>
        <end position="52"/>
    </location>
    <ligand>
        <name>substrate</name>
    </ligand>
</feature>
<feature type="binding site" evidence="1">
    <location>
        <position position="114"/>
    </location>
    <ligand>
        <name>substrate</name>
    </ligand>
</feature>
<feature type="binding site" evidence="1">
    <location>
        <begin position="119"/>
        <end position="121"/>
    </location>
    <ligand>
        <name>substrate</name>
    </ligand>
</feature>
<feature type="binding site" evidence="1">
    <location>
        <position position="125"/>
    </location>
    <ligand>
        <name>substrate</name>
    </ligand>
</feature>
<feature type="binding site" evidence="1">
    <location>
        <begin position="199"/>
        <end position="204"/>
    </location>
    <ligand>
        <name>NADP(+)</name>
        <dbReference type="ChEBI" id="CHEBI:58349"/>
    </ligand>
</feature>
<feature type="site" description="Important for activity" evidence="1">
    <location>
        <position position="104"/>
    </location>
</feature>
<feature type="sequence conflict" description="In Ref. 1; CAA71452." evidence="2" ref="1">
    <original>TA</original>
    <variation>AT</variation>
    <location>
        <begin position="71"/>
        <end position="72"/>
    </location>
</feature>
<feature type="sequence conflict" description="In Ref. 1; CAA71452." evidence="2" ref="1">
    <original>G</original>
    <variation>D</variation>
    <location>
        <position position="91"/>
    </location>
</feature>
<feature type="sequence conflict" description="In Ref. 1; CAA71452." evidence="2" ref="1">
    <original>M</original>
    <variation>P</variation>
    <location>
        <position position="135"/>
    </location>
</feature>
<feature type="sequence conflict" description="In Ref. 1; CAA71452." evidence="2" ref="1">
    <original>N</original>
    <variation>S</variation>
    <location>
        <position position="171"/>
    </location>
</feature>
<feature type="sequence conflict" description="In Ref. 1; CAA71452." evidence="2" ref="1">
    <original>A</original>
    <variation>V</variation>
    <location>
        <position position="282"/>
    </location>
</feature>
<feature type="sequence conflict" description="In Ref. 1; CAA71452." evidence="2" ref="1">
    <original>V</original>
    <variation>A</variation>
    <location>
        <position position="326"/>
    </location>
</feature>
<feature type="sequence conflict" description="In Ref. 1; CAA71452." evidence="2" ref="1">
    <original>A</original>
    <variation>V</variation>
    <location>
        <position position="344"/>
    </location>
</feature>
<feature type="sequence conflict" description="In Ref. 1; CAA71452." evidence="2" ref="1">
    <original>L</original>
    <variation>F</variation>
    <location>
        <position position="379"/>
    </location>
</feature>
<comment type="function">
    <text evidence="1">Catalyzes the NADPH-dependent reduction of glutamyl-tRNA(Glu) to glutamate 1-semialdehyde (GSA).</text>
</comment>
<comment type="catalytic activity">
    <reaction evidence="1">
        <text>(S)-4-amino-5-oxopentanoate + tRNA(Glu) + NADP(+) = L-glutamyl-tRNA(Glu) + NADPH + H(+)</text>
        <dbReference type="Rhea" id="RHEA:12344"/>
        <dbReference type="Rhea" id="RHEA-COMP:9663"/>
        <dbReference type="Rhea" id="RHEA-COMP:9680"/>
        <dbReference type="ChEBI" id="CHEBI:15378"/>
        <dbReference type="ChEBI" id="CHEBI:57501"/>
        <dbReference type="ChEBI" id="CHEBI:57783"/>
        <dbReference type="ChEBI" id="CHEBI:58349"/>
        <dbReference type="ChEBI" id="CHEBI:78442"/>
        <dbReference type="ChEBI" id="CHEBI:78520"/>
        <dbReference type="EC" id="1.2.1.70"/>
    </reaction>
</comment>
<comment type="pathway">
    <text evidence="1">Porphyrin-containing compound metabolism; protoporphyrin-IX biosynthesis; 5-aminolevulinate from L-glutamyl-tRNA(Glu): step 1/2.</text>
</comment>
<comment type="subunit">
    <text evidence="1">Homodimer.</text>
</comment>
<comment type="domain">
    <text evidence="1">Possesses an unusual extended V-shaped dimeric structure with each monomer consisting of three distinct domains arranged along a curved 'spinal' alpha-helix. The N-terminal catalytic domain specifically recognizes the glutamate moiety of the substrate. The second domain is the NADPH-binding domain, and the third C-terminal domain is responsible for dimerization.</text>
</comment>
<comment type="miscellaneous">
    <text evidence="1">During catalysis, the active site Cys acts as a nucleophile attacking the alpha-carbonyl group of tRNA-bound glutamate with the formation of a thioester intermediate between enzyme and glutamate, and the concomitant release of tRNA(Glu). The thioester intermediate is finally reduced by direct hydride transfer from NADPH, to form the product GSA.</text>
</comment>
<comment type="similarity">
    <text evidence="1">Belongs to the glutamyl-tRNA reductase family.</text>
</comment>
<name>HEM1_PASMU</name>
<protein>
    <recommendedName>
        <fullName evidence="1">Glutamyl-tRNA reductase</fullName>
        <shortName evidence="1">GluTR</shortName>
        <ecNumber evidence="1">1.2.1.70</ecNumber>
    </recommendedName>
</protein>
<organism>
    <name type="scientific">Pasteurella multocida (strain Pm70)</name>
    <dbReference type="NCBI Taxonomy" id="272843"/>
    <lineage>
        <taxon>Bacteria</taxon>
        <taxon>Pseudomonadati</taxon>
        <taxon>Pseudomonadota</taxon>
        <taxon>Gammaproteobacteria</taxon>
        <taxon>Pasteurellales</taxon>
        <taxon>Pasteurellaceae</taxon>
        <taxon>Pasteurella</taxon>
    </lineage>
</organism>
<evidence type="ECO:0000255" key="1">
    <source>
        <dbReference type="HAMAP-Rule" id="MF_00087"/>
    </source>
</evidence>
<evidence type="ECO:0000305" key="2"/>
<accession>P95525</accession>
<gene>
    <name evidence="1" type="primary">hemA</name>
    <name type="synonym">gltX1</name>
    <name type="ordered locus">PM0684</name>
</gene>